<evidence type="ECO:0000255" key="1">
    <source>
        <dbReference type="HAMAP-Rule" id="MF_00599"/>
    </source>
</evidence>
<name>FTSB_YERPS</name>
<protein>
    <recommendedName>
        <fullName evidence="1">Cell division protein FtsB</fullName>
    </recommendedName>
</protein>
<feature type="chain" id="PRO_1000025743" description="Cell division protein FtsB">
    <location>
        <begin position="1"/>
        <end position="106"/>
    </location>
</feature>
<feature type="topological domain" description="Cytoplasmic" evidence="1">
    <location>
        <begin position="1"/>
        <end position="3"/>
    </location>
</feature>
<feature type="transmembrane region" description="Helical" evidence="1">
    <location>
        <begin position="4"/>
        <end position="21"/>
    </location>
</feature>
<feature type="topological domain" description="Periplasmic" evidence="1">
    <location>
        <begin position="22"/>
        <end position="106"/>
    </location>
</feature>
<feature type="coiled-coil region" evidence="1">
    <location>
        <begin position="31"/>
        <end position="62"/>
    </location>
</feature>
<comment type="function">
    <text evidence="1">Essential cell division protein. May link together the upstream cell division proteins, which are predominantly cytoplasmic, with the downstream cell division proteins, which are predominantly periplasmic.</text>
</comment>
<comment type="subunit">
    <text evidence="1">Part of a complex composed of FtsB, FtsL and FtsQ.</text>
</comment>
<comment type="subcellular location">
    <subcellularLocation>
        <location evidence="1">Cell inner membrane</location>
        <topology evidence="1">Single-pass type II membrane protein</topology>
    </subcellularLocation>
    <text evidence="1">Localizes to the division septum.</text>
</comment>
<comment type="similarity">
    <text evidence="1">Belongs to the FtsB family.</text>
</comment>
<accession>Q66EC4</accession>
<keyword id="KW-0131">Cell cycle</keyword>
<keyword id="KW-0132">Cell division</keyword>
<keyword id="KW-0997">Cell inner membrane</keyword>
<keyword id="KW-1003">Cell membrane</keyword>
<keyword id="KW-0175">Coiled coil</keyword>
<keyword id="KW-0472">Membrane</keyword>
<keyword id="KW-0812">Transmembrane</keyword>
<keyword id="KW-1133">Transmembrane helix</keyword>
<dbReference type="EMBL" id="BX936398">
    <property type="protein sequence ID" value="CAH20009.1"/>
    <property type="molecule type" value="Genomic_DNA"/>
</dbReference>
<dbReference type="RefSeq" id="WP_002209390.1">
    <property type="nucleotide sequence ID" value="NZ_CP009712.1"/>
</dbReference>
<dbReference type="SMR" id="Q66EC4"/>
<dbReference type="GeneID" id="57975347"/>
<dbReference type="KEGG" id="ypo:BZ17_1787"/>
<dbReference type="KEGG" id="yps:YPTB0769"/>
<dbReference type="PATRIC" id="fig|273123.14.peg.1892"/>
<dbReference type="Proteomes" id="UP000001011">
    <property type="component" value="Chromosome"/>
</dbReference>
<dbReference type="GO" id="GO:0032153">
    <property type="term" value="C:cell division site"/>
    <property type="evidence" value="ECO:0007669"/>
    <property type="project" value="UniProtKB-UniRule"/>
</dbReference>
<dbReference type="GO" id="GO:0030428">
    <property type="term" value="C:cell septum"/>
    <property type="evidence" value="ECO:0007669"/>
    <property type="project" value="TreeGrafter"/>
</dbReference>
<dbReference type="GO" id="GO:0005886">
    <property type="term" value="C:plasma membrane"/>
    <property type="evidence" value="ECO:0007669"/>
    <property type="project" value="UniProtKB-SubCell"/>
</dbReference>
<dbReference type="GO" id="GO:0043093">
    <property type="term" value="P:FtsZ-dependent cytokinesis"/>
    <property type="evidence" value="ECO:0007669"/>
    <property type="project" value="UniProtKB-UniRule"/>
</dbReference>
<dbReference type="Gene3D" id="1.20.5.400">
    <property type="match status" value="1"/>
</dbReference>
<dbReference type="HAMAP" id="MF_00599">
    <property type="entry name" value="FtsB"/>
    <property type="match status" value="1"/>
</dbReference>
<dbReference type="InterPro" id="IPR023081">
    <property type="entry name" value="Cell_div_FtsB"/>
</dbReference>
<dbReference type="InterPro" id="IPR007060">
    <property type="entry name" value="FtsL/DivIC"/>
</dbReference>
<dbReference type="NCBIfam" id="NF002058">
    <property type="entry name" value="PRK00888.1"/>
    <property type="match status" value="1"/>
</dbReference>
<dbReference type="PANTHER" id="PTHR37485">
    <property type="entry name" value="CELL DIVISION PROTEIN FTSB"/>
    <property type="match status" value="1"/>
</dbReference>
<dbReference type="PANTHER" id="PTHR37485:SF1">
    <property type="entry name" value="CELL DIVISION PROTEIN FTSB"/>
    <property type="match status" value="1"/>
</dbReference>
<dbReference type="Pfam" id="PF04977">
    <property type="entry name" value="DivIC"/>
    <property type="match status" value="1"/>
</dbReference>
<gene>
    <name evidence="1" type="primary">ftsB</name>
    <name type="ordered locus">YPTB0769</name>
</gene>
<organism>
    <name type="scientific">Yersinia pseudotuberculosis serotype I (strain IP32953)</name>
    <dbReference type="NCBI Taxonomy" id="273123"/>
    <lineage>
        <taxon>Bacteria</taxon>
        <taxon>Pseudomonadati</taxon>
        <taxon>Pseudomonadota</taxon>
        <taxon>Gammaproteobacteria</taxon>
        <taxon>Enterobacterales</taxon>
        <taxon>Yersiniaceae</taxon>
        <taxon>Yersinia</taxon>
    </lineage>
</organism>
<reference key="1">
    <citation type="journal article" date="2004" name="Proc. Natl. Acad. Sci. U.S.A.">
        <title>Insights into the evolution of Yersinia pestis through whole-genome comparison with Yersinia pseudotuberculosis.</title>
        <authorList>
            <person name="Chain P.S.G."/>
            <person name="Carniel E."/>
            <person name="Larimer F.W."/>
            <person name="Lamerdin J."/>
            <person name="Stoutland P.O."/>
            <person name="Regala W.M."/>
            <person name="Georgescu A.M."/>
            <person name="Vergez L.M."/>
            <person name="Land M.L."/>
            <person name="Motin V.L."/>
            <person name="Brubaker R.R."/>
            <person name="Fowler J."/>
            <person name="Hinnebusch J."/>
            <person name="Marceau M."/>
            <person name="Medigue C."/>
            <person name="Simonet M."/>
            <person name="Chenal-Francisque V."/>
            <person name="Souza B."/>
            <person name="Dacheux D."/>
            <person name="Elliott J.M."/>
            <person name="Derbise A."/>
            <person name="Hauser L.J."/>
            <person name="Garcia E."/>
        </authorList>
    </citation>
    <scope>NUCLEOTIDE SEQUENCE [LARGE SCALE GENOMIC DNA]</scope>
    <source>
        <strain>IP32953</strain>
    </source>
</reference>
<proteinExistence type="inferred from homology"/>
<sequence length="106" mass="11869">MGKLTLLLLVLLGWLQYSLWLGKNGIHDFVRVKEDVAAQEANNSTLKARNDQLFAEIDDLNGGQEAIEERARNELGMIKPGESFYRLVPDQSRRNAGTPSTQNNAQ</sequence>